<sequence length="597" mass="65076">MLLLLLLLLLPPLLCGRVGAKEQKDYLLTMQKSVTVQEGLCVSVLCSFSYPQNGWTDSDPVHGYWFRAGDHVSRNVPVATNNPARAVQEETRDRFHLLGDPQNKDCTLSIRDTRESDAGTYVFRVERGNMKWNYKYDQLSVNVTASQDLLSRYRLEVPESVTVQEGLCVSVPCSVLYPHCNWTASSPVYGSWFKEGADIPCDIPVATNTPSGKVQEDTQGRFLLLGDPQTNNCSLSIRDARKGDSGKYYFQVERGSRKWNYIYDKLSVHVTALTHLPTFSIPGTLESGHPRNLTCSVPWACEQGTPPTITWMGASVSSLEPTISRSSMLSLIPKPQDHGTSLTCQVTLPGAGVTTTRAVRLNISYPPQNLTMTVFQGDGTASTTLRNGSALSVLEGQSLHLVCAVDSNPPARLSWTWGSLTLSPSQSSNLGVLELPRVHVKDEGEFTCRAQNPLGSQHISLSLSLQNEYTGKMRPISGVTLGAVGGAGATALVFLSFCIIFVVVRSCRKKSARPAVGVGDTGMEDTNAVRGSASQGPLIESPADDSPPHHAPPALATPFPEEGEIQYASLSFHKARPQYPQEQEAIGYEYSEINILK</sequence>
<name>SIG12_PANTR</name>
<protein>
    <recommendedName>
        <fullName>Sialic acid-binding Ig-like lectin 12</fullName>
        <shortName>Siglec-12</shortName>
    </recommendedName>
    <alternativeName>
        <fullName>Sialic acid-binding Ig-like lectin-like 1</fullName>
        <shortName>Siglec-L1</shortName>
    </alternativeName>
</protein>
<reference key="1">
    <citation type="journal article" date="2001" name="J. Biol. Chem.">
        <title>A second uniquely human mutation affecting sialic acid biology.</title>
        <authorList>
            <person name="Angata T."/>
            <person name="Varki N.M."/>
            <person name="Varki A."/>
        </authorList>
    </citation>
    <scope>NUCLEOTIDE SEQUENCE [MRNA]</scope>
</reference>
<comment type="function">
    <text>Putative adhesion molecule that mediates sialic-acid dependent binding to cells. The sialic acid recognition site may be masked by cis interactions with sialic acids on the same cell surface.</text>
</comment>
<comment type="subcellular location">
    <subcellularLocation>
        <location>Membrane</location>
        <topology>Single-pass type I membrane protein</topology>
    </subcellularLocation>
</comment>
<comment type="domain">
    <text>Contains 1 copy of a cytoplasmic motif that is referred to as the immunoreceptor tyrosine-based inhibitor motif (ITIM). This motif is involved in modulation of cellular responses. The phosphorylated ITIM motif can bind the SH2 domain of several SH2-containing phosphatases.</text>
</comment>
<comment type="similarity">
    <text evidence="5">Belongs to the immunoglobulin superfamily. SIGLEC (sialic acid binding Ig-like lectin) family.</text>
</comment>
<accession>Q95LH0</accession>
<keyword id="KW-0130">Cell adhesion</keyword>
<keyword id="KW-1015">Disulfide bond</keyword>
<keyword id="KW-0325">Glycoprotein</keyword>
<keyword id="KW-0393">Immunoglobulin domain</keyword>
<keyword id="KW-0430">Lectin</keyword>
<keyword id="KW-0472">Membrane</keyword>
<keyword id="KW-0597">Phosphoprotein</keyword>
<keyword id="KW-1185">Reference proteome</keyword>
<keyword id="KW-0677">Repeat</keyword>
<keyword id="KW-0732">Signal</keyword>
<keyword id="KW-0812">Transmembrane</keyword>
<keyword id="KW-1133">Transmembrane helix</keyword>
<organism>
    <name type="scientific">Pan troglodytes</name>
    <name type="common">Chimpanzee</name>
    <dbReference type="NCBI Taxonomy" id="9598"/>
    <lineage>
        <taxon>Eukaryota</taxon>
        <taxon>Metazoa</taxon>
        <taxon>Chordata</taxon>
        <taxon>Craniata</taxon>
        <taxon>Vertebrata</taxon>
        <taxon>Euteleostomi</taxon>
        <taxon>Mammalia</taxon>
        <taxon>Eutheria</taxon>
        <taxon>Euarchontoglires</taxon>
        <taxon>Primates</taxon>
        <taxon>Haplorrhini</taxon>
        <taxon>Catarrhini</taxon>
        <taxon>Hominidae</taxon>
        <taxon>Pan</taxon>
    </lineage>
</organism>
<proteinExistence type="evidence at transcript level"/>
<dbReference type="EMBL" id="AF293372">
    <property type="protein sequence ID" value="AAL09302.1"/>
    <property type="molecule type" value="mRNA"/>
</dbReference>
<dbReference type="RefSeq" id="NP_001009040.1">
    <property type="nucleotide sequence ID" value="NM_001009040.1"/>
</dbReference>
<dbReference type="FunCoup" id="Q95LH0">
    <property type="interactions" value="357"/>
</dbReference>
<dbReference type="STRING" id="9598.ENSPTRP00000054309"/>
<dbReference type="GlyCosmos" id="Q95LH0">
    <property type="glycosylation" value="7 sites, No reported glycans"/>
</dbReference>
<dbReference type="GeneID" id="450120"/>
<dbReference type="KEGG" id="ptr:450120"/>
<dbReference type="CTD" id="27181"/>
<dbReference type="InParanoid" id="Q95LH0"/>
<dbReference type="OrthoDB" id="8329at9604"/>
<dbReference type="Proteomes" id="UP000002277">
    <property type="component" value="Unplaced"/>
</dbReference>
<dbReference type="GO" id="GO:0005886">
    <property type="term" value="C:plasma membrane"/>
    <property type="evidence" value="ECO:0000318"/>
    <property type="project" value="GO_Central"/>
</dbReference>
<dbReference type="GO" id="GO:0030246">
    <property type="term" value="F:carbohydrate binding"/>
    <property type="evidence" value="ECO:0007669"/>
    <property type="project" value="UniProtKB-KW"/>
</dbReference>
<dbReference type="GO" id="GO:0033691">
    <property type="term" value="F:sialic acid binding"/>
    <property type="evidence" value="ECO:0000318"/>
    <property type="project" value="GO_Central"/>
</dbReference>
<dbReference type="GO" id="GO:0007155">
    <property type="term" value="P:cell adhesion"/>
    <property type="evidence" value="ECO:0000318"/>
    <property type="project" value="GO_Central"/>
</dbReference>
<dbReference type="CDD" id="cd05712">
    <property type="entry name" value="IgV_CD33"/>
    <property type="match status" value="1"/>
</dbReference>
<dbReference type="FunFam" id="2.60.40.10:FF:000912">
    <property type="entry name" value="Myeloid cell surface antigen CD33"/>
    <property type="match status" value="1"/>
</dbReference>
<dbReference type="FunFam" id="2.60.40.10:FF:001240">
    <property type="entry name" value="Sialic acid binding Ig-like lectin E"/>
    <property type="match status" value="1"/>
</dbReference>
<dbReference type="FunFam" id="2.60.40.10:FF:000829">
    <property type="entry name" value="Sialic acid-binding Ig-like lectin 8"/>
    <property type="match status" value="2"/>
</dbReference>
<dbReference type="Gene3D" id="2.60.40.10">
    <property type="entry name" value="Immunoglobulins"/>
    <property type="match status" value="4"/>
</dbReference>
<dbReference type="InterPro" id="IPR007110">
    <property type="entry name" value="Ig-like_dom"/>
</dbReference>
<dbReference type="InterPro" id="IPR036179">
    <property type="entry name" value="Ig-like_dom_sf"/>
</dbReference>
<dbReference type="InterPro" id="IPR013783">
    <property type="entry name" value="Ig-like_fold"/>
</dbReference>
<dbReference type="InterPro" id="IPR003599">
    <property type="entry name" value="Ig_sub"/>
</dbReference>
<dbReference type="InterPro" id="IPR003598">
    <property type="entry name" value="Ig_sub2"/>
</dbReference>
<dbReference type="InterPro" id="IPR013106">
    <property type="entry name" value="Ig_V-set"/>
</dbReference>
<dbReference type="InterPro" id="IPR051036">
    <property type="entry name" value="SIGLEC"/>
</dbReference>
<dbReference type="PANTHER" id="PTHR12035">
    <property type="entry name" value="SIALIC ACID BINDING IMMUNOGLOBULIN-LIKE LECTIN"/>
    <property type="match status" value="1"/>
</dbReference>
<dbReference type="PANTHER" id="PTHR12035:SF53">
    <property type="entry name" value="SIALIC ACID-BINDING IG-LIKE LECTIN 12"/>
    <property type="match status" value="1"/>
</dbReference>
<dbReference type="Pfam" id="PF13927">
    <property type="entry name" value="Ig_3"/>
    <property type="match status" value="1"/>
</dbReference>
<dbReference type="Pfam" id="PF07686">
    <property type="entry name" value="V-set"/>
    <property type="match status" value="2"/>
</dbReference>
<dbReference type="SMART" id="SM00409">
    <property type="entry name" value="IG"/>
    <property type="match status" value="4"/>
</dbReference>
<dbReference type="SMART" id="SM00408">
    <property type="entry name" value="IGc2"/>
    <property type="match status" value="1"/>
</dbReference>
<dbReference type="SUPFAM" id="SSF48726">
    <property type="entry name" value="Immunoglobulin"/>
    <property type="match status" value="4"/>
</dbReference>
<dbReference type="PROSITE" id="PS50835">
    <property type="entry name" value="IG_LIKE"/>
    <property type="match status" value="3"/>
</dbReference>
<feature type="signal peptide" evidence="2">
    <location>
        <begin position="1"/>
        <end position="20"/>
    </location>
</feature>
<feature type="chain" id="PRO_0000014955" description="Sialic acid-binding Ig-like lectin 12">
    <location>
        <begin position="21"/>
        <end position="597"/>
    </location>
</feature>
<feature type="topological domain" description="Extracellular" evidence="2">
    <location>
        <begin position="21"/>
        <end position="483"/>
    </location>
</feature>
<feature type="transmembrane region" description="Helical" evidence="2">
    <location>
        <begin position="484"/>
        <end position="504"/>
    </location>
</feature>
<feature type="topological domain" description="Cytoplasmic" evidence="2">
    <location>
        <begin position="505"/>
        <end position="597"/>
    </location>
</feature>
<feature type="domain" description="Ig-like V-type 1">
    <location>
        <begin position="21"/>
        <end position="144"/>
    </location>
</feature>
<feature type="domain" description="Ig-like V-type 2">
    <location>
        <begin position="145"/>
        <end position="271"/>
    </location>
</feature>
<feature type="domain" description="Ig-like C2-type 1">
    <location>
        <begin position="277"/>
        <end position="360"/>
    </location>
</feature>
<feature type="domain" description="Ig-like C2-type 2">
    <location>
        <begin position="367"/>
        <end position="464"/>
    </location>
</feature>
<feature type="region of interest" description="Disordered" evidence="4">
    <location>
        <begin position="514"/>
        <end position="558"/>
    </location>
</feature>
<feature type="short sequence motif" description="ITIM motif">
    <location>
        <begin position="565"/>
        <end position="570"/>
    </location>
</feature>
<feature type="short sequence motif" description="SLAM-like motif">
    <location>
        <begin position="588"/>
        <end position="593"/>
    </location>
</feature>
<feature type="modified residue" description="Phosphotyrosine" evidence="1">
    <location>
        <position position="567"/>
    </location>
</feature>
<feature type="modified residue" description="Phosphotyrosine" evidence="1">
    <location>
        <position position="590"/>
    </location>
</feature>
<feature type="glycosylation site" description="N-linked (GlcNAc...) asparagine" evidence="2">
    <location>
        <position position="142"/>
    </location>
</feature>
<feature type="glycosylation site" description="N-linked (GlcNAc...) asparagine" evidence="2">
    <location>
        <position position="181"/>
    </location>
</feature>
<feature type="glycosylation site" description="N-linked (GlcNAc...) asparagine" evidence="2">
    <location>
        <position position="232"/>
    </location>
</feature>
<feature type="glycosylation site" description="N-linked (GlcNAc...) asparagine" evidence="2">
    <location>
        <position position="292"/>
    </location>
</feature>
<feature type="glycosylation site" description="N-linked (GlcNAc...) asparagine" evidence="2">
    <location>
        <position position="362"/>
    </location>
</feature>
<feature type="glycosylation site" description="N-linked (GlcNAc...) asparagine" evidence="2">
    <location>
        <position position="369"/>
    </location>
</feature>
<feature type="glycosylation site" description="N-linked (GlcNAc...) asparagine" evidence="2">
    <location>
        <position position="387"/>
    </location>
</feature>
<feature type="disulfide bond" evidence="3">
    <location>
        <begin position="46"/>
        <end position="106"/>
    </location>
</feature>
<feature type="disulfide bond" evidence="3">
    <location>
        <begin position="168"/>
        <end position="301"/>
    </location>
</feature>
<feature type="disulfide bond" evidence="3">
    <location>
        <begin position="173"/>
        <end position="233"/>
    </location>
</feature>
<feature type="disulfide bond" evidence="3">
    <location>
        <begin position="295"/>
        <end position="344"/>
    </location>
</feature>
<feature type="disulfide bond" evidence="3">
    <location>
        <begin position="403"/>
        <end position="448"/>
    </location>
</feature>
<evidence type="ECO:0000250" key="1">
    <source>
        <dbReference type="UniProtKB" id="Q91Y57"/>
    </source>
</evidence>
<evidence type="ECO:0000255" key="2"/>
<evidence type="ECO:0000255" key="3">
    <source>
        <dbReference type="PROSITE-ProRule" id="PRU00114"/>
    </source>
</evidence>
<evidence type="ECO:0000256" key="4">
    <source>
        <dbReference type="SAM" id="MobiDB-lite"/>
    </source>
</evidence>
<evidence type="ECO:0000305" key="5"/>
<gene>
    <name type="primary">SIGLEC12</name>
    <name type="synonym">SIGLECL1</name>
</gene>